<keyword id="KW-0002">3D-structure</keyword>
<keyword id="KW-0025">Alternative splicing</keyword>
<keyword id="KW-0963">Cytoplasm</keyword>
<keyword id="KW-1267">Proteomics identification</keyword>
<keyword id="KW-1185">Reference proteome</keyword>
<keyword id="KW-0732">Signal</keyword>
<proteinExistence type="evidence at protein level"/>
<dbReference type="EMBL" id="AL512355">
    <property type="status" value="NOT_ANNOTATED_CDS"/>
    <property type="molecule type" value="Genomic_DNA"/>
</dbReference>
<dbReference type="EMBL" id="BC006414">
    <property type="protein sequence ID" value="AAH06414.1"/>
    <property type="molecule type" value="mRNA"/>
</dbReference>
<dbReference type="EMBL" id="BC042525">
    <property type="protein sequence ID" value="AAH42525.1"/>
    <property type="molecule type" value="mRNA"/>
</dbReference>
<dbReference type="EMBL" id="AF353674">
    <property type="protein sequence ID" value="AAK39520.1"/>
    <property type="status" value="ALT_INIT"/>
    <property type="molecule type" value="mRNA"/>
</dbReference>
<dbReference type="CCDS" id="CCDS10002.2">
    <molecule id="Q96KE9-1"/>
</dbReference>
<dbReference type="CCDS" id="CCDS91955.1">
    <molecule id="Q96KE9-3"/>
</dbReference>
<dbReference type="RefSeq" id="NP_001374496.1">
    <molecule id="Q96KE9-3"/>
    <property type="nucleotide sequence ID" value="NM_001387567.1"/>
</dbReference>
<dbReference type="RefSeq" id="NP_150374.2">
    <molecule id="Q96KE9-1"/>
    <property type="nucleotide sequence ID" value="NM_033271.3"/>
</dbReference>
<dbReference type="RefSeq" id="XP_005268245.1">
    <property type="nucleotide sequence ID" value="XM_005268188.3"/>
</dbReference>
<dbReference type="PDB" id="2VKP">
    <property type="method" value="X-ray"/>
    <property type="resolution" value="1.90 A"/>
    <property type="chains" value="A/B=129-236"/>
</dbReference>
<dbReference type="PDBsum" id="2VKP"/>
<dbReference type="SMR" id="Q96KE9"/>
<dbReference type="BioGRID" id="124668">
    <property type="interactions" value="21"/>
</dbReference>
<dbReference type="FunCoup" id="Q96KE9">
    <property type="interactions" value="689"/>
</dbReference>
<dbReference type="IntAct" id="Q96KE9">
    <property type="interactions" value="15"/>
</dbReference>
<dbReference type="MINT" id="Q96KE9"/>
<dbReference type="STRING" id="9606.ENSP00000376337"/>
<dbReference type="iPTMnet" id="Q96KE9"/>
<dbReference type="PhosphoSitePlus" id="Q96KE9"/>
<dbReference type="BioMuta" id="BTBD6"/>
<dbReference type="DMDM" id="254763426"/>
<dbReference type="jPOST" id="Q96KE9"/>
<dbReference type="MassIVE" id="Q96KE9"/>
<dbReference type="PaxDb" id="9606-ENSP00000376337"/>
<dbReference type="PeptideAtlas" id="Q96KE9"/>
<dbReference type="ProteomicsDB" id="77063">
    <molecule id="Q96KE9-1"/>
</dbReference>
<dbReference type="ProteomicsDB" id="77064">
    <molecule id="Q96KE9-2"/>
</dbReference>
<dbReference type="Antibodypedia" id="15012">
    <property type="antibodies" value="156 antibodies from 29 providers"/>
</dbReference>
<dbReference type="DNASU" id="90135"/>
<dbReference type="Ensembl" id="ENST00000392554.8">
    <molecule id="Q96KE9-3"/>
    <property type="protein sequence ID" value="ENSP00000376337.4"/>
    <property type="gene ID" value="ENSG00000184887.14"/>
</dbReference>
<dbReference type="Ensembl" id="ENST00000463376.6">
    <molecule id="Q96KE9-2"/>
    <property type="protein sequence ID" value="ENSP00000418150.3"/>
    <property type="gene ID" value="ENSG00000184887.14"/>
</dbReference>
<dbReference type="Ensembl" id="ENST00000536364.6">
    <molecule id="Q96KE9-1"/>
    <property type="protein sequence ID" value="ENSP00000443091.1"/>
    <property type="gene ID" value="ENSG00000184887.14"/>
</dbReference>
<dbReference type="GeneID" id="90135"/>
<dbReference type="KEGG" id="hsa:90135"/>
<dbReference type="MANE-Select" id="ENST00000392554.8">
    <property type="protein sequence ID" value="ENSP00000376337.4"/>
    <property type="RefSeq nucleotide sequence ID" value="NM_001387567.1"/>
    <property type="RefSeq protein sequence ID" value="NP_001374496.1"/>
</dbReference>
<dbReference type="UCSC" id="uc059fzp.1">
    <molecule id="Q96KE9-3"/>
    <property type="organism name" value="human"/>
</dbReference>
<dbReference type="AGR" id="HGNC:19897"/>
<dbReference type="CTD" id="90135"/>
<dbReference type="DisGeNET" id="90135"/>
<dbReference type="GeneCards" id="BTBD6"/>
<dbReference type="HGNC" id="HGNC:19897">
    <property type="gene designation" value="BTBD6"/>
</dbReference>
<dbReference type="HPA" id="ENSG00000184887">
    <property type="expression patterns" value="Tissue enhanced (skeletal)"/>
</dbReference>
<dbReference type="neXtProt" id="NX_Q96KE9"/>
<dbReference type="OpenTargets" id="ENSG00000184887"/>
<dbReference type="PharmGKB" id="PA128394741"/>
<dbReference type="VEuPathDB" id="HostDB:ENSG00000184887"/>
<dbReference type="eggNOG" id="KOG2075">
    <property type="taxonomic scope" value="Eukaryota"/>
</dbReference>
<dbReference type="GeneTree" id="ENSGT00940000155720"/>
<dbReference type="HOGENOM" id="CLU_015899_2_1_1"/>
<dbReference type="InParanoid" id="Q96KE9"/>
<dbReference type="OrthoDB" id="636773at2759"/>
<dbReference type="PAN-GO" id="Q96KE9">
    <property type="GO annotations" value="2 GO annotations based on evolutionary models"/>
</dbReference>
<dbReference type="PhylomeDB" id="Q96KE9"/>
<dbReference type="TreeFam" id="TF106482"/>
<dbReference type="PathwayCommons" id="Q96KE9"/>
<dbReference type="Reactome" id="R-HSA-8951664">
    <property type="pathway name" value="Neddylation"/>
</dbReference>
<dbReference type="Reactome" id="R-HSA-983168">
    <property type="pathway name" value="Antigen processing: Ubiquitination &amp; Proteasome degradation"/>
</dbReference>
<dbReference type="SignaLink" id="Q96KE9"/>
<dbReference type="BioGRID-ORCS" id="90135">
    <property type="hits" value="21 hits in 1177 CRISPR screens"/>
</dbReference>
<dbReference type="ChiTaRS" id="BTBD6">
    <property type="organism name" value="human"/>
</dbReference>
<dbReference type="EvolutionaryTrace" id="Q96KE9"/>
<dbReference type="GenomeRNAi" id="90135"/>
<dbReference type="Pharos" id="Q96KE9">
    <property type="development level" value="Tbio"/>
</dbReference>
<dbReference type="PRO" id="PR:Q96KE9"/>
<dbReference type="Proteomes" id="UP000005640">
    <property type="component" value="Chromosome 14"/>
</dbReference>
<dbReference type="RNAct" id="Q96KE9">
    <property type="molecule type" value="protein"/>
</dbReference>
<dbReference type="Bgee" id="ENSG00000184887">
    <property type="expression patterns" value="Expressed in sperm and 183 other cell types or tissues"/>
</dbReference>
<dbReference type="ExpressionAtlas" id="Q96KE9">
    <property type="expression patterns" value="baseline and differential"/>
</dbReference>
<dbReference type="GO" id="GO:0005829">
    <property type="term" value="C:cytosol"/>
    <property type="evidence" value="ECO:0000318"/>
    <property type="project" value="GO_Central"/>
</dbReference>
<dbReference type="GO" id="GO:0022008">
    <property type="term" value="P:neurogenesis"/>
    <property type="evidence" value="ECO:0000318"/>
    <property type="project" value="GO_Central"/>
</dbReference>
<dbReference type="CDD" id="cd18525">
    <property type="entry name" value="BACK_BTBD6"/>
    <property type="match status" value="1"/>
</dbReference>
<dbReference type="CDD" id="cd18349">
    <property type="entry name" value="BTB_POZ_BTBD6"/>
    <property type="match status" value="1"/>
</dbReference>
<dbReference type="FunFam" id="1.25.40.420:FF:000003">
    <property type="entry name" value="BTB/POZ domain-containing protein 3"/>
    <property type="match status" value="1"/>
</dbReference>
<dbReference type="FunFam" id="2.60.120.820:FF:000001">
    <property type="entry name" value="BTB/POZ domain-containing protein 3"/>
    <property type="match status" value="1"/>
</dbReference>
<dbReference type="FunFam" id="3.30.710.10:FF:000015">
    <property type="entry name" value="BTB/POZ domain-containing protein 3"/>
    <property type="match status" value="1"/>
</dbReference>
<dbReference type="Gene3D" id="1.25.40.420">
    <property type="match status" value="1"/>
</dbReference>
<dbReference type="Gene3D" id="2.60.120.820">
    <property type="entry name" value="PHR domain"/>
    <property type="match status" value="1"/>
</dbReference>
<dbReference type="Gene3D" id="3.30.710.10">
    <property type="entry name" value="Potassium Channel Kv1.1, Chain A"/>
    <property type="match status" value="1"/>
</dbReference>
<dbReference type="InterPro" id="IPR011705">
    <property type="entry name" value="BACK"/>
</dbReference>
<dbReference type="InterPro" id="IPR000210">
    <property type="entry name" value="BTB/POZ_dom"/>
</dbReference>
<dbReference type="InterPro" id="IPR049738">
    <property type="entry name" value="BTB_POZ_BTBD6"/>
</dbReference>
<dbReference type="InterPro" id="IPR012983">
    <property type="entry name" value="PHR"/>
</dbReference>
<dbReference type="InterPro" id="IPR038648">
    <property type="entry name" value="PHR_sf"/>
</dbReference>
<dbReference type="InterPro" id="IPR011333">
    <property type="entry name" value="SKP1/BTB/POZ_sf"/>
</dbReference>
<dbReference type="PANTHER" id="PTHR45774">
    <property type="entry name" value="BTB/POZ DOMAIN-CONTAINING"/>
    <property type="match status" value="1"/>
</dbReference>
<dbReference type="PANTHER" id="PTHR45774:SF5">
    <property type="entry name" value="BTB_POZ DOMAIN-CONTAINING PROTEIN 6"/>
    <property type="match status" value="1"/>
</dbReference>
<dbReference type="Pfam" id="PF07707">
    <property type="entry name" value="BACK"/>
    <property type="match status" value="1"/>
</dbReference>
<dbReference type="Pfam" id="PF00651">
    <property type="entry name" value="BTB"/>
    <property type="match status" value="1"/>
</dbReference>
<dbReference type="Pfam" id="PF08005">
    <property type="entry name" value="PHR"/>
    <property type="match status" value="1"/>
</dbReference>
<dbReference type="SMART" id="SM00875">
    <property type="entry name" value="BACK"/>
    <property type="match status" value="1"/>
</dbReference>
<dbReference type="SMART" id="SM00225">
    <property type="entry name" value="BTB"/>
    <property type="match status" value="1"/>
</dbReference>
<dbReference type="SUPFAM" id="SSF54695">
    <property type="entry name" value="POZ domain"/>
    <property type="match status" value="1"/>
</dbReference>
<dbReference type="PROSITE" id="PS50097">
    <property type="entry name" value="BTB"/>
    <property type="match status" value="1"/>
</dbReference>
<reference key="1">
    <citation type="journal article" date="2003" name="Nature">
        <title>The DNA sequence and analysis of human chromosome 14.</title>
        <authorList>
            <person name="Heilig R."/>
            <person name="Eckenberg R."/>
            <person name="Petit J.-L."/>
            <person name="Fonknechten N."/>
            <person name="Da Silva C."/>
            <person name="Cattolico L."/>
            <person name="Levy M."/>
            <person name="Barbe V."/>
            <person name="De Berardinis V."/>
            <person name="Ureta-Vidal A."/>
            <person name="Pelletier E."/>
            <person name="Vico V."/>
            <person name="Anthouard V."/>
            <person name="Rowen L."/>
            <person name="Madan A."/>
            <person name="Qin S."/>
            <person name="Sun H."/>
            <person name="Du H."/>
            <person name="Pepin K."/>
            <person name="Artiguenave F."/>
            <person name="Robert C."/>
            <person name="Cruaud C."/>
            <person name="Bruels T."/>
            <person name="Jaillon O."/>
            <person name="Friedlander L."/>
            <person name="Samson G."/>
            <person name="Brottier P."/>
            <person name="Cure S."/>
            <person name="Segurens B."/>
            <person name="Aniere F."/>
            <person name="Samain S."/>
            <person name="Crespeau H."/>
            <person name="Abbasi N."/>
            <person name="Aiach N."/>
            <person name="Boscus D."/>
            <person name="Dickhoff R."/>
            <person name="Dors M."/>
            <person name="Dubois I."/>
            <person name="Friedman C."/>
            <person name="Gouyvenoux M."/>
            <person name="James R."/>
            <person name="Madan A."/>
            <person name="Mairey-Estrada B."/>
            <person name="Mangenot S."/>
            <person name="Martins N."/>
            <person name="Menard M."/>
            <person name="Oztas S."/>
            <person name="Ratcliffe A."/>
            <person name="Shaffer T."/>
            <person name="Trask B."/>
            <person name="Vacherie B."/>
            <person name="Bellemere C."/>
            <person name="Belser C."/>
            <person name="Besnard-Gonnet M."/>
            <person name="Bartol-Mavel D."/>
            <person name="Boutard M."/>
            <person name="Briez-Silla S."/>
            <person name="Combette S."/>
            <person name="Dufosse-Laurent V."/>
            <person name="Ferron C."/>
            <person name="Lechaplais C."/>
            <person name="Louesse C."/>
            <person name="Muselet D."/>
            <person name="Magdelenat G."/>
            <person name="Pateau E."/>
            <person name="Petit E."/>
            <person name="Sirvain-Trukniewicz P."/>
            <person name="Trybou A."/>
            <person name="Vega-Czarny N."/>
            <person name="Bataille E."/>
            <person name="Bluet E."/>
            <person name="Bordelais I."/>
            <person name="Dubois M."/>
            <person name="Dumont C."/>
            <person name="Guerin T."/>
            <person name="Haffray S."/>
            <person name="Hammadi R."/>
            <person name="Muanga J."/>
            <person name="Pellouin V."/>
            <person name="Robert D."/>
            <person name="Wunderle E."/>
            <person name="Gauguet G."/>
            <person name="Roy A."/>
            <person name="Sainte-Marthe L."/>
            <person name="Verdier J."/>
            <person name="Verdier-Discala C."/>
            <person name="Hillier L.W."/>
            <person name="Fulton L."/>
            <person name="McPherson J."/>
            <person name="Matsuda F."/>
            <person name="Wilson R."/>
            <person name="Scarpelli C."/>
            <person name="Gyapay G."/>
            <person name="Wincker P."/>
            <person name="Saurin W."/>
            <person name="Quetier F."/>
            <person name="Waterston R."/>
            <person name="Hood L."/>
            <person name="Weissenbach J."/>
        </authorList>
    </citation>
    <scope>NUCLEOTIDE SEQUENCE [LARGE SCALE GENOMIC DNA]</scope>
</reference>
<reference key="2">
    <citation type="journal article" date="2004" name="Genome Res.">
        <title>The status, quality, and expansion of the NIH full-length cDNA project: the Mammalian Gene Collection (MGC).</title>
        <authorList>
            <consortium name="The MGC Project Team"/>
        </authorList>
    </citation>
    <scope>NUCLEOTIDE SEQUENCE [LARGE SCALE MRNA] (ISOFORM 2)</scope>
    <source>
        <tissue>Testis</tissue>
        <tissue>Uterus</tissue>
    </source>
</reference>
<reference key="3">
    <citation type="journal article" date="2002" name="Mol. Vis.">
        <title>Expressed sequence tag analysis of adult human lens for the NEIBank project: over 2000 non-redundant transcripts, novel genes and splice variants.</title>
        <authorList>
            <person name="Wistow G."/>
            <person name="Bernstein S.L."/>
            <person name="Wyatt M.K."/>
            <person name="Behal A."/>
            <person name="Touchman J.W."/>
            <person name="Bouffard G."/>
            <person name="Smith D."/>
            <person name="Peterson K."/>
        </authorList>
    </citation>
    <scope>NUCLEOTIDE SEQUENCE [LARGE SCALE MRNA] OF 59-538 (ISOFORMS 1 AND 2)</scope>
    <scope>TISSUE SPECIFICITY</scope>
    <source>
        <tissue>Lens</tissue>
    </source>
</reference>
<reference key="4">
    <citation type="submission" date="2008-02" db="PDB data bank">
        <title>Crystal structure of BTB domain from BTBD6.</title>
        <authorList>
            <consortium name="Structural genomics consortium (SGC)"/>
        </authorList>
    </citation>
    <scope>X-RAY CRYSTALLOGRAPHY (1.9 ANGSTROMS) OF 129-236</scope>
</reference>
<protein>
    <recommendedName>
        <fullName evidence="7">BTB/POZ domain-containing protein 6</fullName>
    </recommendedName>
    <alternativeName>
        <fullName>Lens BTB domain protein</fullName>
    </alternativeName>
</protein>
<gene>
    <name evidence="8" type="primary">BTBD6</name>
    <name type="synonym">BDPL</name>
</gene>
<sequence>MLLPLACLHGRVAQCLTSLLLLAEPLPRPRRGARARGAASTGAEAAPAAPPAKMAAELYAPASAAAADLANSNAGAAVGRKAGPRSPPSAPAPAPPPPAPAPPTLGNNHQESPGWRCCRPTLRERNALMFNNELMADVHFVVGPPGATRTVPAHKYVLAVGSSVFYAMFYGDLAEVKSEIHIPDVEPAAFLILLKYMYSDEIDLEADTVLATLYAAKKYIVPALAKACVNFLETSLEAKNACVLLSQSRLFEEPELTQRCWEVIDAQAEMALRSEGFCEIDRQTLEIIVTREALNTKEAVVFEAVLNWAEAECKRQGLPITPRNKRHVLGRALYLVRIPTMTLEEFANGAAQSDILTLEETHSIFLWYTATNKPRLDFPLTKRKGLAPQRCHRFQSSAYRSNQWRYRGRCDSIQFAVDRRVFIAGLGLYGSSSGKAEYSVKIELKRLGVVLAQNLTKFMSDGSSNTFPVWFEHPVQVEQDTFYTASAVLDGSELSYFGQEGMTEVQCGKVAFQFQCSSDSTNGTGVQGGQIPELIFYA</sequence>
<organism>
    <name type="scientific">Homo sapiens</name>
    <name type="common">Human</name>
    <dbReference type="NCBI Taxonomy" id="9606"/>
    <lineage>
        <taxon>Eukaryota</taxon>
        <taxon>Metazoa</taxon>
        <taxon>Chordata</taxon>
        <taxon>Craniata</taxon>
        <taxon>Vertebrata</taxon>
        <taxon>Euteleostomi</taxon>
        <taxon>Mammalia</taxon>
        <taxon>Eutheria</taxon>
        <taxon>Euarchontoglires</taxon>
        <taxon>Primates</taxon>
        <taxon>Haplorrhini</taxon>
        <taxon>Catarrhini</taxon>
        <taxon>Hominidae</taxon>
        <taxon>Homo</taxon>
    </lineage>
</organism>
<name>BTBD6_HUMAN</name>
<comment type="function">
    <text evidence="1 2">Adapter protein for the cul3 E3 ubiquitin-protein ligase complex (By similarity). Involved in late neuronal development and muscle formation (By similarity).</text>
</comment>
<comment type="interaction">
    <interactant intactId="EBI-12012762">
        <id>Q96KE9-2</id>
    </interactant>
    <interactant intactId="EBI-311155">
        <id>Q9Y2F9</id>
        <label>BTBD3</label>
    </interactant>
    <organismsDiffer>false</organismsDiffer>
    <experiments>3</experiments>
</comment>
<comment type="interaction">
    <interactant intactId="EBI-12012762">
        <id>Q96KE9-2</id>
    </interactant>
    <interactant intactId="EBI-456129">
        <id>Q13618</id>
        <label>CUL3</label>
    </interactant>
    <organismsDiffer>false</organismsDiffer>
    <experiments>3</experiments>
</comment>
<comment type="interaction">
    <interactant intactId="EBI-12012762">
        <id>Q96KE9-2</id>
    </interactant>
    <interactant intactId="EBI-352889">
        <id>Q15653</id>
        <label>NFKBIB</label>
    </interactant>
    <organismsDiffer>false</organismsDiffer>
    <experiments>3</experiments>
</comment>
<comment type="interaction">
    <interactant intactId="EBI-12012762">
        <id>Q96KE9-2</id>
    </interactant>
    <interactant intactId="EBI-744782">
        <id>Q9Y5B8</id>
        <label>NME7</label>
    </interactant>
    <organismsDiffer>false</organismsDiffer>
    <experiments>5</experiments>
</comment>
<comment type="interaction">
    <interactant intactId="EBI-12012762">
        <id>Q96KE9-2</id>
    </interactant>
    <interactant intactId="EBI-741158">
        <id>Q96HA8</id>
        <label>NTAQ1</label>
    </interactant>
    <organismsDiffer>false</organismsDiffer>
    <experiments>3</experiments>
</comment>
<comment type="interaction">
    <interactant intactId="EBI-12012762">
        <id>Q96KE9-2</id>
    </interactant>
    <interactant intactId="EBI-710310">
        <id>Q15560</id>
        <label>TCEA2</label>
    </interactant>
    <organismsDiffer>false</organismsDiffer>
    <experiments>3</experiments>
</comment>
<comment type="subcellular location">
    <subcellularLocation>
        <location evidence="2">Cytoplasm</location>
    </subcellularLocation>
    <text evidence="2">Found in punctated bodies in the cytoplasm.</text>
</comment>
<comment type="alternative products">
    <event type="alternative splicing"/>
    <isoform>
        <id>Q96KE9-3</id>
        <name>1</name>
        <sequence type="displayed"/>
    </isoform>
    <isoform>
        <id>Q96KE9-1</id>
        <name>2</name>
        <sequence type="described" ref="VSP_061436"/>
    </isoform>
    <isoform>
        <id>Q96KE9-2</id>
        <name>3</name>
        <sequence type="described" ref="VSP_061435"/>
    </isoform>
</comment>
<comment type="tissue specificity">
    <text evidence="6">Expressed in lens.</text>
</comment>
<comment type="sequence caution" evidence="7">
    <conflict type="erroneous initiation">
        <sequence resource="EMBL-CDS" id="AAK39520"/>
    </conflict>
    <text>Extended N-terminus.</text>
</comment>
<evidence type="ECO:0000250" key="1">
    <source>
        <dbReference type="UniProtKB" id="A9JRD8"/>
    </source>
</evidence>
<evidence type="ECO:0000250" key="2">
    <source>
        <dbReference type="UniProtKB" id="Q2LE78"/>
    </source>
</evidence>
<evidence type="ECO:0000255" key="3"/>
<evidence type="ECO:0000255" key="4">
    <source>
        <dbReference type="PROSITE-ProRule" id="PRU00037"/>
    </source>
</evidence>
<evidence type="ECO:0000256" key="5">
    <source>
        <dbReference type="SAM" id="MobiDB-lite"/>
    </source>
</evidence>
<evidence type="ECO:0000269" key="6">
    <source>
    </source>
</evidence>
<evidence type="ECO:0000305" key="7"/>
<evidence type="ECO:0000312" key="8">
    <source>
        <dbReference type="HGNC" id="HGNC:19897"/>
    </source>
</evidence>
<evidence type="ECO:0007829" key="9">
    <source>
        <dbReference type="PDB" id="2VKP"/>
    </source>
</evidence>
<feature type="signal peptide" evidence="3">
    <location>
        <begin position="1"/>
        <end position="17"/>
    </location>
</feature>
<feature type="chain" id="PRO_0000186213" description="BTB/POZ domain-containing protein 6" evidence="3">
    <location>
        <begin position="18"/>
        <end position="538"/>
    </location>
</feature>
<feature type="domain" description="BTB" evidence="4">
    <location>
        <begin position="136"/>
        <end position="206"/>
    </location>
</feature>
<feature type="region of interest" description="Disordered" evidence="5">
    <location>
        <begin position="29"/>
        <end position="53"/>
    </location>
</feature>
<feature type="region of interest" description="Disordered" evidence="5">
    <location>
        <begin position="76"/>
        <end position="115"/>
    </location>
</feature>
<feature type="compositionally biased region" description="Low complexity" evidence="5">
    <location>
        <begin position="35"/>
        <end position="53"/>
    </location>
</feature>
<feature type="compositionally biased region" description="Pro residues" evidence="5">
    <location>
        <begin position="85"/>
        <end position="103"/>
    </location>
</feature>
<feature type="splice variant" id="VSP_061435" description="In isoform 3.">
    <location>
        <begin position="1"/>
        <end position="128"/>
    </location>
</feature>
<feature type="splice variant" id="VSP_061436" description="In isoform 2.">
    <location>
        <begin position="1"/>
        <end position="53"/>
    </location>
</feature>
<feature type="sequence conflict" description="In Ref. 3; AAK39520." evidence="7" ref="3">
    <original>A</original>
    <variation>R</variation>
    <location>
        <position position="64"/>
    </location>
</feature>
<feature type="sequence conflict" description="In Ref. 2; AAH42525." evidence="7" ref="2">
    <original>R</original>
    <variation>G</variation>
    <location>
        <position position="326"/>
    </location>
</feature>
<feature type="strand" evidence="9">
    <location>
        <begin position="138"/>
        <end position="144"/>
    </location>
</feature>
<feature type="strand" evidence="9">
    <location>
        <begin position="149"/>
        <end position="153"/>
    </location>
</feature>
<feature type="helix" evidence="9">
    <location>
        <begin position="155"/>
        <end position="161"/>
    </location>
</feature>
<feature type="helix" evidence="9">
    <location>
        <begin position="163"/>
        <end position="169"/>
    </location>
</feature>
<feature type="strand" evidence="9">
    <location>
        <begin position="179"/>
        <end position="182"/>
    </location>
</feature>
<feature type="helix" evidence="9">
    <location>
        <begin position="187"/>
        <end position="199"/>
    </location>
</feature>
<feature type="turn" evidence="9">
    <location>
        <begin position="206"/>
        <end position="208"/>
    </location>
</feature>
<feature type="helix" evidence="9">
    <location>
        <begin position="209"/>
        <end position="218"/>
    </location>
</feature>
<feature type="helix" evidence="9">
    <location>
        <begin position="222"/>
        <end position="235"/>
    </location>
</feature>
<accession>Q96KE9</accession>
<accession>Q8IVQ7</accession>
<accession>Q9BR94</accession>